<name>ACP_ERYLO</name>
<sequence length="26" mass="2900">MSDTATRVQKIVVEHLGVESDKVTQE</sequence>
<dbReference type="SMR" id="P80919"/>
<dbReference type="STRING" id="1044.EH31_10135"/>
<dbReference type="eggNOG" id="COG0236">
    <property type="taxonomic scope" value="Bacteria"/>
</dbReference>
<dbReference type="UniPathway" id="UPA00094"/>
<dbReference type="GO" id="GO:0005737">
    <property type="term" value="C:cytoplasm"/>
    <property type="evidence" value="ECO:0007669"/>
    <property type="project" value="UniProtKB-SubCell"/>
</dbReference>
<dbReference type="GO" id="GO:0006633">
    <property type="term" value="P:fatty acid biosynthetic process"/>
    <property type="evidence" value="ECO:0007669"/>
    <property type="project" value="UniProtKB-UniPathway"/>
</dbReference>
<dbReference type="InterPro" id="IPR009081">
    <property type="entry name" value="PP-bd_ACP"/>
</dbReference>
<dbReference type="PROSITE" id="PS50075">
    <property type="entry name" value="CARRIER"/>
    <property type="match status" value="1"/>
</dbReference>
<accession>P80919</accession>
<evidence type="ECO:0000250" key="1"/>
<evidence type="ECO:0000255" key="2">
    <source>
        <dbReference type="PROSITE-ProRule" id="PRU00258"/>
    </source>
</evidence>
<evidence type="ECO:0000269" key="3">
    <source>
    </source>
</evidence>
<evidence type="ECO:0000305" key="4"/>
<comment type="function">
    <text>Carrier of the growing fatty acid chain in fatty acid biosynthesis.</text>
</comment>
<comment type="pathway">
    <text>Lipid metabolism; fatty acid biosynthesis.</text>
</comment>
<comment type="subcellular location">
    <subcellularLocation>
        <location evidence="1">Cytoplasm</location>
    </subcellularLocation>
</comment>
<comment type="PTM">
    <text>4'-phosphopantetheine is transferred from CoA to a specific serine of apo-ACP by AcpS. This modification is essential for activity because fatty acids are bound in thioester linkage to the sulfhydryl of the prosthetic group.</text>
</comment>
<comment type="similarity">
    <text evidence="4">Belongs to the acyl carrier protein (ACP) family.</text>
</comment>
<reference key="1">
    <citation type="journal article" date="1997" name="J. Bacteriol.">
        <title>Domains of Escherichia coli acyl carrier protein important for membrane-derived-oligosaccharide biosynthesis.</title>
        <authorList>
            <person name="Tang L."/>
            <person name="Weissborn A.C."/>
            <person name="Kennedy E.P."/>
        </authorList>
    </citation>
    <scope>PROTEIN SEQUENCE OF 2-26</scope>
    <source>
        <strain>ATCC 33941 / DSM 6997 / CIP 104268 / IAM 14242 / JCM 6170 / KCTC 2829 / NBRC 14126 / NCIMB 2174 / OCh101</strain>
    </source>
</reference>
<protein>
    <recommendedName>
        <fullName>Acyl carrier protein</fullName>
        <shortName>ACP</shortName>
    </recommendedName>
</protein>
<feature type="initiator methionine" description="Removed" evidence="3">
    <location>
        <position position="1"/>
    </location>
</feature>
<feature type="chain" id="PRO_0000180138" description="Acyl carrier protein">
    <location>
        <begin position="2"/>
        <end position="26" status="greater than"/>
    </location>
</feature>
<feature type="domain" description="Carrier" evidence="2">
    <location>
        <begin position="2"/>
        <end position="26" status="greater than"/>
    </location>
</feature>
<feature type="non-terminal residue">
    <location>
        <position position="26"/>
    </location>
</feature>
<organism>
    <name type="scientific">Erythrobacter longus</name>
    <dbReference type="NCBI Taxonomy" id="1044"/>
    <lineage>
        <taxon>Bacteria</taxon>
        <taxon>Pseudomonadati</taxon>
        <taxon>Pseudomonadota</taxon>
        <taxon>Alphaproteobacteria</taxon>
        <taxon>Sphingomonadales</taxon>
        <taxon>Erythrobacteraceae</taxon>
        <taxon>Erythrobacter/Porphyrobacter group</taxon>
        <taxon>Erythrobacter</taxon>
    </lineage>
</organism>
<keyword id="KW-0963">Cytoplasm</keyword>
<keyword id="KW-0903">Direct protein sequencing</keyword>
<keyword id="KW-0275">Fatty acid biosynthesis</keyword>
<keyword id="KW-0276">Fatty acid metabolism</keyword>
<keyword id="KW-0444">Lipid biosynthesis</keyword>
<keyword id="KW-0443">Lipid metabolism</keyword>
<keyword id="KW-0596">Phosphopantetheine</keyword>
<gene>
    <name type="primary">acpP</name>
</gene>
<proteinExistence type="evidence at protein level"/>